<comment type="function">
    <text evidence="3">Component of the TOM (translocase of outer membrane) receptor complex responsible for the recognition and translocation of cytosolically synthesized mitochondrial preproteins. TOM5 is involved in insertion of preproteins into the TOM40 translocation pore.</text>
</comment>
<comment type="subunit">
    <text evidence="4">Forms part of the TOM (translocase of outer membrane) complex that consists of at least 7 different proteins (TOM5, TOM6, TOM7, TOM20, TOM22, TOM40 and TOM70).</text>
</comment>
<comment type="interaction">
    <interactant intactId="EBI-12501">
        <id>P80967</id>
    </interactant>
    <interactant intactId="EBI-21744">
        <id>P25574</id>
        <label>EMC1</label>
    </interactant>
    <organismsDiffer>false</organismsDiffer>
    <experiments>2</experiments>
</comment>
<comment type="interaction">
    <interactant intactId="EBI-12501">
        <id>P80967</id>
    </interactant>
    <interactant intactId="EBI-25568">
        <id>P47133</id>
        <label>EMC2</label>
    </interactant>
    <organismsDiffer>false</organismsDiffer>
    <experiments>3</experiments>
</comment>
<comment type="interaction">
    <interactant intactId="EBI-12501">
        <id>P80967</id>
    </interactant>
    <interactant intactId="EBI-24977">
        <id>P40540</id>
        <label>EMC5</label>
    </interactant>
    <organismsDiffer>false</organismsDiffer>
    <experiments>2</experiments>
</comment>
<comment type="subcellular location">
    <subcellularLocation>
        <location evidence="5">Mitochondrion outer membrane</location>
        <topology evidence="5">Single-pass membrane protein</topology>
    </subcellularLocation>
    <text evidence="5">Outer membrane-anchored.</text>
</comment>
<comment type="similarity">
    <text evidence="5">Belongs to the Tom5 family.</text>
</comment>
<sequence length="50" mass="5985">MFGLPQQEVSEEEKRAHQEQTEKTLKQAAYVAAFLWVSPMIWHLVKKQWK</sequence>
<evidence type="ECO:0000255" key="1"/>
<evidence type="ECO:0000256" key="2">
    <source>
        <dbReference type="SAM" id="MobiDB-lite"/>
    </source>
</evidence>
<evidence type="ECO:0000269" key="3">
    <source>
    </source>
</evidence>
<evidence type="ECO:0000269" key="4">
    <source>
    </source>
</evidence>
<evidence type="ECO:0000305" key="5"/>
<evidence type="ECO:0007829" key="6">
    <source>
        <dbReference type="PDB" id="7E4I"/>
    </source>
</evidence>
<gene>
    <name type="primary">TOM5</name>
    <name type="synonym">MOM8A</name>
    <name type="ordered locus">YPR133W-A</name>
</gene>
<proteinExistence type="evidence at protein level"/>
<accession>P80967</accession>
<accession>D6W4D0</accession>
<protein>
    <recommendedName>
        <fullName>Mitochondrial import receptor subunit TOM5</fullName>
    </recommendedName>
    <alternativeName>
        <fullName>Translocase of outer membrane 5 kDa subunit</fullName>
    </alternativeName>
</protein>
<name>TOM5_YEAST</name>
<feature type="chain" id="PRO_0000218264" description="Mitochondrial import receptor subunit TOM5">
    <location>
        <begin position="1"/>
        <end position="50"/>
    </location>
</feature>
<feature type="topological domain" description="Cytoplasmic" evidence="1">
    <location>
        <begin position="1"/>
        <end position="26"/>
    </location>
</feature>
<feature type="transmembrane region" description="Helical; Signal-anchor for type II membrane protein" evidence="1">
    <location>
        <begin position="27"/>
        <end position="45"/>
    </location>
</feature>
<feature type="region of interest" description="Disordered" evidence="2">
    <location>
        <begin position="1"/>
        <end position="20"/>
    </location>
</feature>
<feature type="helix" evidence="6">
    <location>
        <begin position="14"/>
        <end position="48"/>
    </location>
</feature>
<reference key="1">
    <citation type="journal article" date="1997" name="Nature">
        <title>The nucleotide sequence of Saccharomyces cerevisiae chromosome XVI.</title>
        <authorList>
            <person name="Bussey H."/>
            <person name="Storms R.K."/>
            <person name="Ahmed A."/>
            <person name="Albermann K."/>
            <person name="Allen E."/>
            <person name="Ansorge W."/>
            <person name="Araujo R."/>
            <person name="Aparicio A."/>
            <person name="Barrell B.G."/>
            <person name="Badcock K."/>
            <person name="Benes V."/>
            <person name="Botstein D."/>
            <person name="Bowman S."/>
            <person name="Brueckner M."/>
            <person name="Carpenter J."/>
            <person name="Cherry J.M."/>
            <person name="Chung E."/>
            <person name="Churcher C.M."/>
            <person name="Coster F."/>
            <person name="Davis K."/>
            <person name="Davis R.W."/>
            <person name="Dietrich F.S."/>
            <person name="Delius H."/>
            <person name="DiPaolo T."/>
            <person name="Dubois E."/>
            <person name="Duesterhoeft A."/>
            <person name="Duncan M."/>
            <person name="Floeth M."/>
            <person name="Fortin N."/>
            <person name="Friesen J.D."/>
            <person name="Fritz C."/>
            <person name="Goffeau A."/>
            <person name="Hall J."/>
            <person name="Hebling U."/>
            <person name="Heumann K."/>
            <person name="Hilbert H."/>
            <person name="Hillier L.W."/>
            <person name="Hunicke-Smith S."/>
            <person name="Hyman R.W."/>
            <person name="Johnston M."/>
            <person name="Kalman S."/>
            <person name="Kleine K."/>
            <person name="Komp C."/>
            <person name="Kurdi O."/>
            <person name="Lashkari D."/>
            <person name="Lew H."/>
            <person name="Lin A."/>
            <person name="Lin D."/>
            <person name="Louis E.J."/>
            <person name="Marathe R."/>
            <person name="Messenguy F."/>
            <person name="Mewes H.-W."/>
            <person name="Mirtipati S."/>
            <person name="Moestl D."/>
            <person name="Mueller-Auer S."/>
            <person name="Namath A."/>
            <person name="Nentwich U."/>
            <person name="Oefner P."/>
            <person name="Pearson D."/>
            <person name="Petel F.X."/>
            <person name="Pohl T.M."/>
            <person name="Purnelle B."/>
            <person name="Rajandream M.A."/>
            <person name="Rechmann S."/>
            <person name="Rieger M."/>
            <person name="Riles L."/>
            <person name="Roberts D."/>
            <person name="Schaefer M."/>
            <person name="Scharfe M."/>
            <person name="Scherens B."/>
            <person name="Schramm S."/>
            <person name="Schroeder M."/>
            <person name="Sdicu A.-M."/>
            <person name="Tettelin H."/>
            <person name="Urrestarazu L.A."/>
            <person name="Ushinsky S."/>
            <person name="Vierendeels F."/>
            <person name="Vissers S."/>
            <person name="Voss H."/>
            <person name="Walsh S.V."/>
            <person name="Wambutt R."/>
            <person name="Wang Y."/>
            <person name="Wedler E."/>
            <person name="Wedler H."/>
            <person name="Winnett E."/>
            <person name="Zhong W.-W."/>
            <person name="Zollner A."/>
            <person name="Vo D.H."/>
            <person name="Hani J."/>
        </authorList>
    </citation>
    <scope>NUCLEOTIDE SEQUENCE [LARGE SCALE GENOMIC DNA]</scope>
    <source>
        <strain>ATCC 204508 / S288c</strain>
    </source>
</reference>
<reference key="2">
    <citation type="journal article" date="2014" name="G3 (Bethesda)">
        <title>The reference genome sequence of Saccharomyces cerevisiae: Then and now.</title>
        <authorList>
            <person name="Engel S.R."/>
            <person name="Dietrich F.S."/>
            <person name="Fisk D.G."/>
            <person name="Binkley G."/>
            <person name="Balakrishnan R."/>
            <person name="Costanzo M.C."/>
            <person name="Dwight S.S."/>
            <person name="Hitz B.C."/>
            <person name="Karra K."/>
            <person name="Nash R.S."/>
            <person name="Weng S."/>
            <person name="Wong E.D."/>
            <person name="Lloyd P."/>
            <person name="Skrzypek M.S."/>
            <person name="Miyasato S.R."/>
            <person name="Simison M."/>
            <person name="Cherry J.M."/>
        </authorList>
    </citation>
    <scope>GENOME REANNOTATION</scope>
    <source>
        <strain>ATCC 204508 / S288c</strain>
    </source>
</reference>
<reference key="3">
    <citation type="journal article" date="2007" name="Genome Res.">
        <title>Approaching a complete repository of sequence-verified protein-encoding clones for Saccharomyces cerevisiae.</title>
        <authorList>
            <person name="Hu Y."/>
            <person name="Rolfs A."/>
            <person name="Bhullar B."/>
            <person name="Murthy T.V.S."/>
            <person name="Zhu C."/>
            <person name="Berger M.F."/>
            <person name="Camargo A.A."/>
            <person name="Kelley F."/>
            <person name="McCarron S."/>
            <person name="Jepson D."/>
            <person name="Richardson A."/>
            <person name="Raphael J."/>
            <person name="Moreira D."/>
            <person name="Taycher E."/>
            <person name="Zuo D."/>
            <person name="Mohr S."/>
            <person name="Kane M.F."/>
            <person name="Williamson J."/>
            <person name="Simpson A.J.G."/>
            <person name="Bulyk M.L."/>
            <person name="Harlow E."/>
            <person name="Marsischky G."/>
            <person name="Kolodner R.D."/>
            <person name="LaBaer J."/>
        </authorList>
    </citation>
    <scope>NUCLEOTIDE SEQUENCE [GENOMIC DNA]</scope>
    <source>
        <strain>ATCC 204508 / S288c</strain>
    </source>
</reference>
<reference key="4">
    <citation type="journal article" date="1997" name="Nature">
        <title>Tom5 functionally links mitochondrial preprotein receptors to the general import pore.</title>
        <authorList>
            <person name="Dietmeier K."/>
            <person name="Hoenlinger A."/>
            <person name="Boemer U."/>
            <person name="Dekker P.J.T."/>
            <person name="Eckerskorn C."/>
            <person name="Lottspeich F."/>
            <person name="Kuebrich M."/>
            <person name="Pfanner N."/>
        </authorList>
    </citation>
    <scope>IDENTIFICATION</scope>
    <scope>FUNCTION</scope>
    <scope>PROTEIN SEQUENCE OF 1-21</scope>
</reference>
<reference key="5">
    <citation type="journal article" date="1998" name="Mol. Cell. Biol.">
        <title>Preprotein translocase of the outer mitochondrial membrane: molecular dissection and assembly of the general import pore complex.</title>
        <authorList>
            <person name="Dekker P.J.T."/>
            <person name="Ryan M.T."/>
            <person name="Brix J."/>
            <person name="Mueller H."/>
            <person name="Hoenlinger A."/>
            <person name="Pfanner N."/>
        </authorList>
    </citation>
    <scope>IDENTIFICATION IN THE TOM COMPLEX</scope>
</reference>
<reference key="6">
    <citation type="journal article" date="2012" name="Proc. Natl. Acad. Sci. U.S.A.">
        <title>N-terminal acetylome analyses and functional insights of the N-terminal acetyltransferase NatB.</title>
        <authorList>
            <person name="Van Damme P."/>
            <person name="Lasa M."/>
            <person name="Polevoda B."/>
            <person name="Gazquez C."/>
            <person name="Elosegui-Artola A."/>
            <person name="Kim D.S."/>
            <person name="De Juan-Pardo E."/>
            <person name="Demeyer K."/>
            <person name="Hole K."/>
            <person name="Larrea E."/>
            <person name="Timmerman E."/>
            <person name="Prieto J."/>
            <person name="Arnesen T."/>
            <person name="Sherman F."/>
            <person name="Gevaert K."/>
            <person name="Aldabe R."/>
        </authorList>
    </citation>
    <scope>IDENTIFICATION BY MASS SPECTROMETRY [LARGE SCALE ANALYSIS]</scope>
</reference>
<dbReference type="EMBL" id="U40829">
    <property type="status" value="NOT_ANNOTATED_CDS"/>
    <property type="molecule type" value="Genomic_DNA"/>
</dbReference>
<dbReference type="EMBL" id="AY558369">
    <property type="protein sequence ID" value="AAS56695.1"/>
    <property type="molecule type" value="Genomic_DNA"/>
</dbReference>
<dbReference type="EMBL" id="BK006949">
    <property type="protein sequence ID" value="DAA11546.1"/>
    <property type="molecule type" value="Genomic_DNA"/>
</dbReference>
<dbReference type="PIR" id="S77712">
    <property type="entry name" value="S77712"/>
</dbReference>
<dbReference type="RefSeq" id="NP_015459.1">
    <property type="nucleotide sequence ID" value="NM_001184307.1"/>
</dbReference>
<dbReference type="PDB" id="6JNF">
    <property type="method" value="EM"/>
    <property type="resolution" value="3.81 A"/>
    <property type="chains" value="D/I=1-50"/>
</dbReference>
<dbReference type="PDB" id="6UCU">
    <property type="method" value="EM"/>
    <property type="resolution" value="3.06 A"/>
    <property type="chains" value="C/K=1-50"/>
</dbReference>
<dbReference type="PDB" id="6UCV">
    <property type="method" value="EM"/>
    <property type="resolution" value="4.10 A"/>
    <property type="chains" value="C/K/c/k=1-50"/>
</dbReference>
<dbReference type="PDB" id="7E4I">
    <property type="method" value="EM"/>
    <property type="resolution" value="3.05 A"/>
    <property type="chains" value="E=1-50"/>
</dbReference>
<dbReference type="PDB" id="8HCO">
    <property type="method" value="EM"/>
    <property type="resolution" value="4.10 A"/>
    <property type="chains" value="C/K=1-50"/>
</dbReference>
<dbReference type="PDB" id="8W5J">
    <property type="method" value="EM"/>
    <property type="resolution" value="4.40 A"/>
    <property type="chains" value="C/K=1-50"/>
</dbReference>
<dbReference type="PDB" id="8W5K">
    <property type="method" value="EM"/>
    <property type="resolution" value="3.60 A"/>
    <property type="chains" value="C/K=1-50"/>
</dbReference>
<dbReference type="PDB" id="8XKW">
    <property type="method" value="EM"/>
    <property type="resolution" value="3.64 A"/>
    <property type="chains" value="C/H=1-50"/>
</dbReference>
<dbReference type="PDB" id="8XKX">
    <property type="method" value="EM"/>
    <property type="resolution" value="3.70 A"/>
    <property type="chains" value="C/H=1-50"/>
</dbReference>
<dbReference type="PDB" id="8XKY">
    <property type="method" value="EM"/>
    <property type="resolution" value="3.42 A"/>
    <property type="chains" value="C/H=1-50"/>
</dbReference>
<dbReference type="PDBsum" id="6JNF"/>
<dbReference type="PDBsum" id="6UCU"/>
<dbReference type="PDBsum" id="6UCV"/>
<dbReference type="PDBsum" id="7E4I"/>
<dbReference type="PDBsum" id="8HCO"/>
<dbReference type="PDBsum" id="8W5J"/>
<dbReference type="PDBsum" id="8W5K"/>
<dbReference type="PDBsum" id="8XKW"/>
<dbReference type="PDBsum" id="8XKX"/>
<dbReference type="PDBsum" id="8XKY"/>
<dbReference type="EMDB" id="EMD-20728"/>
<dbReference type="EMDB" id="EMD-20729"/>
<dbReference type="EMDB" id="EMD-30986"/>
<dbReference type="EMDB" id="EMD-34660"/>
<dbReference type="EMDB" id="EMD-37294"/>
<dbReference type="EMDB" id="EMD-37295"/>
<dbReference type="EMDB" id="EMD-38429"/>
<dbReference type="EMDB" id="EMD-38430"/>
<dbReference type="EMDB" id="EMD-38431"/>
<dbReference type="EMDB" id="EMD-9851"/>
<dbReference type="SMR" id="P80967"/>
<dbReference type="BioGRID" id="36300">
    <property type="interactions" value="65"/>
</dbReference>
<dbReference type="ComplexPortal" id="CPX-473">
    <property type="entry name" value="TOM40 mitochondrial outer membrane translocase core complex"/>
</dbReference>
<dbReference type="ComplexPortal" id="CPX-474">
    <property type="entry name" value="TOM40 mitochondrial outer membrane translocase holocomplex"/>
</dbReference>
<dbReference type="DIP" id="DIP-7358N"/>
<dbReference type="FunCoup" id="P80967">
    <property type="interactions" value="47"/>
</dbReference>
<dbReference type="IntAct" id="P80967">
    <property type="interactions" value="10"/>
</dbReference>
<dbReference type="STRING" id="4932.YPR133W-A"/>
<dbReference type="TCDB" id="3.A.8.1.1">
    <property type="family name" value="the mitochondrial protein translocase (mpt) family"/>
</dbReference>
<dbReference type="PaxDb" id="4932-YPR133W-A"/>
<dbReference type="PeptideAtlas" id="P80967"/>
<dbReference type="EnsemblFungi" id="YPR133W-A_mRNA">
    <property type="protein sequence ID" value="YPR133W-A"/>
    <property type="gene ID" value="YPR133W-A"/>
</dbReference>
<dbReference type="GeneID" id="856252"/>
<dbReference type="KEGG" id="sce:YPR133W-A"/>
<dbReference type="AGR" id="SGD:S000006433"/>
<dbReference type="SGD" id="S000006433">
    <property type="gene designation" value="TOM5"/>
</dbReference>
<dbReference type="VEuPathDB" id="FungiDB:YPR133W-A"/>
<dbReference type="eggNOG" id="ENOG502SD3F">
    <property type="taxonomic scope" value="Eukaryota"/>
</dbReference>
<dbReference type="HOGENOM" id="CLU_209440_1_1_1"/>
<dbReference type="InParanoid" id="P80967"/>
<dbReference type="OMA" id="SPIVWHF"/>
<dbReference type="OrthoDB" id="3999796at2759"/>
<dbReference type="BioCyc" id="YEAST:G3O-34325-MONOMER"/>
<dbReference type="BioGRID-ORCS" id="856252">
    <property type="hits" value="5 hits in 10 CRISPR screens"/>
</dbReference>
<dbReference type="PRO" id="PR:P80967"/>
<dbReference type="Proteomes" id="UP000002311">
    <property type="component" value="Chromosome XVI"/>
</dbReference>
<dbReference type="GO" id="GO:0005741">
    <property type="term" value="C:mitochondrial outer membrane"/>
    <property type="evidence" value="ECO:0000314"/>
    <property type="project" value="SGD"/>
</dbReference>
<dbReference type="GO" id="GO:0005742">
    <property type="term" value="C:mitochondrial outer membrane translocase complex"/>
    <property type="evidence" value="ECO:0000314"/>
    <property type="project" value="SGD"/>
</dbReference>
<dbReference type="GO" id="GO:0005739">
    <property type="term" value="C:mitochondrion"/>
    <property type="evidence" value="ECO:0007005"/>
    <property type="project" value="SGD"/>
</dbReference>
<dbReference type="GO" id="GO:0070096">
    <property type="term" value="P:mitochondrial outer membrane translocase complex assembly"/>
    <property type="evidence" value="ECO:0000314"/>
    <property type="project" value="SGD"/>
</dbReference>
<dbReference type="GO" id="GO:0045040">
    <property type="term" value="P:protein insertion into mitochondrial outer membrane"/>
    <property type="evidence" value="ECO:0000314"/>
    <property type="project" value="ComplexPortal"/>
</dbReference>
<dbReference type="GO" id="GO:0006626">
    <property type="term" value="P:protein targeting to mitochondrion"/>
    <property type="evidence" value="ECO:0000315"/>
    <property type="project" value="SGD"/>
</dbReference>
<dbReference type="GO" id="GO:0071806">
    <property type="term" value="P:protein transmembrane transport"/>
    <property type="evidence" value="ECO:0007669"/>
    <property type="project" value="GOC"/>
</dbReference>
<dbReference type="InterPro" id="IPR019603">
    <property type="entry name" value="Tom5"/>
</dbReference>
<dbReference type="PANTHER" id="PTHR28188">
    <property type="entry name" value="MITOCHONDRIAL IMPORT RECEPTOR SUBUNIT TOM5"/>
    <property type="match status" value="1"/>
</dbReference>
<dbReference type="PANTHER" id="PTHR28188:SF1">
    <property type="entry name" value="MITOCHONDRIAL IMPORT RECEPTOR SUBUNIT TOM5"/>
    <property type="match status" value="1"/>
</dbReference>
<dbReference type="Pfam" id="PF10642">
    <property type="entry name" value="Tom5"/>
    <property type="match status" value="1"/>
</dbReference>
<organism>
    <name type="scientific">Saccharomyces cerevisiae (strain ATCC 204508 / S288c)</name>
    <name type="common">Baker's yeast</name>
    <dbReference type="NCBI Taxonomy" id="559292"/>
    <lineage>
        <taxon>Eukaryota</taxon>
        <taxon>Fungi</taxon>
        <taxon>Dikarya</taxon>
        <taxon>Ascomycota</taxon>
        <taxon>Saccharomycotina</taxon>
        <taxon>Saccharomycetes</taxon>
        <taxon>Saccharomycetales</taxon>
        <taxon>Saccharomycetaceae</taxon>
        <taxon>Saccharomyces</taxon>
    </lineage>
</organism>
<keyword id="KW-0002">3D-structure</keyword>
<keyword id="KW-0903">Direct protein sequencing</keyword>
<keyword id="KW-0472">Membrane</keyword>
<keyword id="KW-0496">Mitochondrion</keyword>
<keyword id="KW-1000">Mitochondrion outer membrane</keyword>
<keyword id="KW-0653">Protein transport</keyword>
<keyword id="KW-1185">Reference proteome</keyword>
<keyword id="KW-0735">Signal-anchor</keyword>
<keyword id="KW-0812">Transmembrane</keyword>
<keyword id="KW-1133">Transmembrane helix</keyword>
<keyword id="KW-0813">Transport</keyword>